<reference key="1">
    <citation type="journal article" date="2001" name="Nature">
        <title>Complete genome sequence of Salmonella enterica serovar Typhimurium LT2.</title>
        <authorList>
            <person name="McClelland M."/>
            <person name="Sanderson K.E."/>
            <person name="Spieth J."/>
            <person name="Clifton S.W."/>
            <person name="Latreille P."/>
            <person name="Courtney L."/>
            <person name="Porwollik S."/>
            <person name="Ali J."/>
            <person name="Dante M."/>
            <person name="Du F."/>
            <person name="Hou S."/>
            <person name="Layman D."/>
            <person name="Leonard S."/>
            <person name="Nguyen C."/>
            <person name="Scott K."/>
            <person name="Holmes A."/>
            <person name="Grewal N."/>
            <person name="Mulvaney E."/>
            <person name="Ryan E."/>
            <person name="Sun H."/>
            <person name="Florea L."/>
            <person name="Miller W."/>
            <person name="Stoneking T."/>
            <person name="Nhan M."/>
            <person name="Waterston R."/>
            <person name="Wilson R.K."/>
        </authorList>
    </citation>
    <scope>NUCLEOTIDE SEQUENCE [LARGE SCALE GENOMIC DNA]</scope>
    <source>
        <strain>LT2 / SGSC1412 / ATCC 700720</strain>
    </source>
</reference>
<reference key="2">
    <citation type="journal article" date="1990" name="J. Bacteriol.">
        <title>Chromosomal organization and expression of Escherichia coli pabA.</title>
        <authorList>
            <person name="Tran P.V."/>
            <person name="Bannor T.A."/>
            <person name="Doktor S.Z."/>
            <person name="Nichols B.P."/>
        </authorList>
    </citation>
    <scope>NUCLEOTIDE SEQUENCE [GENOMIC DNA] OF 37-190</scope>
</reference>
<name>PPIA_SALTY</name>
<keyword id="KW-0413">Isomerase</keyword>
<keyword id="KW-0574">Periplasm</keyword>
<keyword id="KW-1185">Reference proteome</keyword>
<keyword id="KW-0697">Rotamase</keyword>
<keyword id="KW-0732">Signal</keyword>
<gene>
    <name type="primary">ppiA</name>
    <name type="synonym">rot</name>
    <name type="synonym">rotA</name>
    <name type="ordered locus">STM3472</name>
</gene>
<dbReference type="EC" id="5.2.1.8"/>
<dbReference type="EMBL" id="AE006468">
    <property type="protein sequence ID" value="AAL22334.1"/>
    <property type="molecule type" value="Genomic_DNA"/>
</dbReference>
<dbReference type="EMBL" id="M32355">
    <property type="protein sequence ID" value="AAA27174.1"/>
    <property type="molecule type" value="Genomic_DNA"/>
</dbReference>
<dbReference type="RefSeq" id="NP_462375.1">
    <property type="nucleotide sequence ID" value="NC_003197.2"/>
</dbReference>
<dbReference type="RefSeq" id="WP_000920478.1">
    <property type="nucleotide sequence ID" value="NC_003197.2"/>
</dbReference>
<dbReference type="BMRB" id="P20753"/>
<dbReference type="SMR" id="P20753"/>
<dbReference type="STRING" id="99287.STM3472"/>
<dbReference type="PaxDb" id="99287-STM3472"/>
<dbReference type="GeneID" id="1254995"/>
<dbReference type="KEGG" id="stm:STM3472"/>
<dbReference type="PATRIC" id="fig|99287.12.peg.3669"/>
<dbReference type="HOGENOM" id="CLU_012062_16_9_6"/>
<dbReference type="OMA" id="SVWGQVI"/>
<dbReference type="PhylomeDB" id="P20753"/>
<dbReference type="BioCyc" id="SENT99287:STM3472-MONOMER"/>
<dbReference type="Proteomes" id="UP000001014">
    <property type="component" value="Chromosome"/>
</dbReference>
<dbReference type="GO" id="GO:0042597">
    <property type="term" value="C:periplasmic space"/>
    <property type="evidence" value="ECO:0007669"/>
    <property type="project" value="UniProtKB-SubCell"/>
</dbReference>
<dbReference type="GO" id="GO:0003755">
    <property type="term" value="F:peptidyl-prolyl cis-trans isomerase activity"/>
    <property type="evidence" value="ECO:0007669"/>
    <property type="project" value="UniProtKB-KW"/>
</dbReference>
<dbReference type="GO" id="GO:0006457">
    <property type="term" value="P:protein folding"/>
    <property type="evidence" value="ECO:0007669"/>
    <property type="project" value="InterPro"/>
</dbReference>
<dbReference type="CDD" id="cd01920">
    <property type="entry name" value="cyclophilin_EcCYP_like"/>
    <property type="match status" value="1"/>
</dbReference>
<dbReference type="FunFam" id="2.40.100.10:FF:000006">
    <property type="entry name" value="Peptidyl-prolyl cis-trans isomerase"/>
    <property type="match status" value="1"/>
</dbReference>
<dbReference type="Gene3D" id="2.40.100.10">
    <property type="entry name" value="Cyclophilin-like"/>
    <property type="match status" value="1"/>
</dbReference>
<dbReference type="InterPro" id="IPR029000">
    <property type="entry name" value="Cyclophilin-like_dom_sf"/>
</dbReference>
<dbReference type="InterPro" id="IPR020892">
    <property type="entry name" value="Cyclophilin-type_PPIase_CS"/>
</dbReference>
<dbReference type="InterPro" id="IPR002130">
    <property type="entry name" value="Cyclophilin-type_PPIase_dom"/>
</dbReference>
<dbReference type="InterPro" id="IPR044665">
    <property type="entry name" value="E_coli_cyclophilin_A-like"/>
</dbReference>
<dbReference type="NCBIfam" id="NF008151">
    <property type="entry name" value="PRK10903.1"/>
    <property type="match status" value="1"/>
</dbReference>
<dbReference type="PANTHER" id="PTHR43246">
    <property type="entry name" value="PEPTIDYL-PROLYL CIS-TRANS ISOMERASE CYP38, CHLOROPLASTIC"/>
    <property type="match status" value="1"/>
</dbReference>
<dbReference type="Pfam" id="PF00160">
    <property type="entry name" value="Pro_isomerase"/>
    <property type="match status" value="1"/>
</dbReference>
<dbReference type="PRINTS" id="PR00153">
    <property type="entry name" value="CSAPPISMRASE"/>
</dbReference>
<dbReference type="SUPFAM" id="SSF50891">
    <property type="entry name" value="Cyclophilin-like"/>
    <property type="match status" value="1"/>
</dbReference>
<dbReference type="PROSITE" id="PS00170">
    <property type="entry name" value="CSA_PPIASE_1"/>
    <property type="match status" value="1"/>
</dbReference>
<dbReference type="PROSITE" id="PS50072">
    <property type="entry name" value="CSA_PPIASE_2"/>
    <property type="match status" value="1"/>
</dbReference>
<evidence type="ECO:0000250" key="1"/>
<evidence type="ECO:0000255" key="2"/>
<evidence type="ECO:0000255" key="3">
    <source>
        <dbReference type="PROSITE-ProRule" id="PRU00156"/>
    </source>
</evidence>
<evidence type="ECO:0000305" key="4"/>
<organism>
    <name type="scientific">Salmonella typhimurium (strain LT2 / SGSC1412 / ATCC 700720)</name>
    <dbReference type="NCBI Taxonomy" id="99287"/>
    <lineage>
        <taxon>Bacteria</taxon>
        <taxon>Pseudomonadati</taxon>
        <taxon>Pseudomonadota</taxon>
        <taxon>Gammaproteobacteria</taxon>
        <taxon>Enterobacterales</taxon>
        <taxon>Enterobacteriaceae</taxon>
        <taxon>Salmonella</taxon>
    </lineage>
</organism>
<comment type="function">
    <text evidence="1">PPIases accelerate the folding of proteins. It catalyzes the cis-trans isomerization of proline imidic peptide bonds in oligopeptides (By similarity).</text>
</comment>
<comment type="catalytic activity">
    <reaction>
        <text>[protein]-peptidylproline (omega=180) = [protein]-peptidylproline (omega=0)</text>
        <dbReference type="Rhea" id="RHEA:16237"/>
        <dbReference type="Rhea" id="RHEA-COMP:10747"/>
        <dbReference type="Rhea" id="RHEA-COMP:10748"/>
        <dbReference type="ChEBI" id="CHEBI:83833"/>
        <dbReference type="ChEBI" id="CHEBI:83834"/>
        <dbReference type="EC" id="5.2.1.8"/>
    </reaction>
</comment>
<comment type="subcellular location">
    <subcellularLocation>
        <location evidence="1">Periplasm</location>
    </subcellularLocation>
</comment>
<comment type="similarity">
    <text evidence="4">Belongs to the cyclophilin-type PPIase family.</text>
</comment>
<protein>
    <recommendedName>
        <fullName>Peptidyl-prolyl cis-trans isomerase A</fullName>
        <shortName>PPIase A</shortName>
        <ecNumber>5.2.1.8</ecNumber>
    </recommendedName>
    <alternativeName>
        <fullName>Rotamase A</fullName>
    </alternativeName>
</protein>
<feature type="signal peptide" evidence="2">
    <location>
        <begin position="1"/>
        <end position="24"/>
    </location>
</feature>
<feature type="chain" id="PRO_0000025498" description="Peptidyl-prolyl cis-trans isomerase A">
    <location>
        <begin position="25"/>
        <end position="190"/>
    </location>
</feature>
<feature type="domain" description="PPIase cyclophilin-type" evidence="3">
    <location>
        <begin position="27"/>
        <end position="188"/>
    </location>
</feature>
<feature type="sequence conflict" description="In Ref. 2." evidence="4" ref="2">
    <original>NS</original>
    <variation>DK</variation>
    <location>
        <begin position="45"/>
        <end position="46"/>
    </location>
</feature>
<feature type="sequence conflict" description="In Ref. 2." evidence="4" ref="2">
    <original>K</original>
    <variation>Q</variation>
    <location>
        <position position="54"/>
    </location>
</feature>
<feature type="sequence conflict" description="In Ref. 2." evidence="4" ref="2">
    <original>N</original>
    <variation>T</variation>
    <location>
        <position position="85"/>
    </location>
</feature>
<proteinExistence type="inferred from homology"/>
<accession>P20753</accession>
<sequence length="190" mass="20332">MLKSTLAAVAAVFALSALSPAALAAKGDPHVLLTTSAGNIELELNSQKAPVSVKNFVDYVNSGFYNNTTFHRVIPGFMIQGGGFNEQMQQKKPNPPIKNEADNGLRNTRGTIAMARTADKDSATSQFFINVADNAFLDHGQRDFGYAVFGKVVKGMDVADKISQVPTHDVGPYQNVPTKPVVILSAKVLP</sequence>